<gene>
    <name evidence="4" type="primary">sdnI</name>
</gene>
<protein>
    <recommendedName>
        <fullName evidence="4">GDP-mannose 4,6-dehydratase sdnI</fullName>
        <ecNumber evidence="1">4.2.1.47</ecNumber>
    </recommendedName>
    <alternativeName>
        <fullName evidence="4">Sordarin/hypoxysordarin biosynthesis cluster protein I</fullName>
    </alternativeName>
</protein>
<accession>A0A1B4XBH2</accession>
<organism>
    <name type="scientific">Sordaria araneosa</name>
    <name type="common">Pleurage araneosa</name>
    <dbReference type="NCBI Taxonomy" id="573841"/>
    <lineage>
        <taxon>Eukaryota</taxon>
        <taxon>Fungi</taxon>
        <taxon>Dikarya</taxon>
        <taxon>Ascomycota</taxon>
        <taxon>Pezizomycotina</taxon>
        <taxon>Sordariomycetes</taxon>
        <taxon>Sordariomycetidae</taxon>
        <taxon>Sordariales</taxon>
        <taxon>Sordariaceae</taxon>
        <taxon>Sordaria</taxon>
    </lineage>
</organism>
<dbReference type="EC" id="4.2.1.47" evidence="1"/>
<dbReference type="EMBL" id="LC079035">
    <property type="protein sequence ID" value="BAV32153.1"/>
    <property type="molecule type" value="Genomic_DNA"/>
</dbReference>
<dbReference type="SMR" id="A0A1B4XBH2"/>
<dbReference type="GO" id="GO:0008446">
    <property type="term" value="F:GDP-mannose 4,6-dehydratase activity"/>
    <property type="evidence" value="ECO:0007669"/>
    <property type="project" value="UniProtKB-EC"/>
</dbReference>
<dbReference type="GO" id="GO:0042351">
    <property type="term" value="P:'de novo' GDP-L-fucose biosynthetic process"/>
    <property type="evidence" value="ECO:0007669"/>
    <property type="project" value="TreeGrafter"/>
</dbReference>
<dbReference type="GO" id="GO:0017000">
    <property type="term" value="P:antibiotic biosynthetic process"/>
    <property type="evidence" value="ECO:0007669"/>
    <property type="project" value="UniProtKB-KW"/>
</dbReference>
<dbReference type="CDD" id="cd05260">
    <property type="entry name" value="GDP_MD_SDR_e"/>
    <property type="match status" value="1"/>
</dbReference>
<dbReference type="FunFam" id="3.40.50.720:FF:000924">
    <property type="entry name" value="GDP-mannose 4,6 dehydratase"/>
    <property type="match status" value="1"/>
</dbReference>
<dbReference type="Gene3D" id="3.40.50.720">
    <property type="entry name" value="NAD(P)-binding Rossmann-like Domain"/>
    <property type="match status" value="1"/>
</dbReference>
<dbReference type="Gene3D" id="3.90.25.10">
    <property type="entry name" value="UDP-galactose 4-epimerase, domain 1"/>
    <property type="match status" value="1"/>
</dbReference>
<dbReference type="HAMAP" id="MF_00955">
    <property type="entry name" value="GDP_Man_dehydratase"/>
    <property type="match status" value="1"/>
</dbReference>
<dbReference type="InterPro" id="IPR006368">
    <property type="entry name" value="GDP_Man_deHydtase"/>
</dbReference>
<dbReference type="InterPro" id="IPR016040">
    <property type="entry name" value="NAD(P)-bd_dom"/>
</dbReference>
<dbReference type="InterPro" id="IPR036291">
    <property type="entry name" value="NAD(P)-bd_dom_sf"/>
</dbReference>
<dbReference type="NCBIfam" id="TIGR01472">
    <property type="entry name" value="gmd"/>
    <property type="match status" value="1"/>
</dbReference>
<dbReference type="PANTHER" id="PTHR43715:SF1">
    <property type="entry name" value="GDP-MANNOSE 4,6 DEHYDRATASE"/>
    <property type="match status" value="1"/>
</dbReference>
<dbReference type="PANTHER" id="PTHR43715">
    <property type="entry name" value="GDP-MANNOSE 4,6-DEHYDRATASE"/>
    <property type="match status" value="1"/>
</dbReference>
<dbReference type="Pfam" id="PF16363">
    <property type="entry name" value="GDP_Man_Dehyd"/>
    <property type="match status" value="1"/>
</dbReference>
<dbReference type="SUPFAM" id="SSF51735">
    <property type="entry name" value="NAD(P)-binding Rossmann-fold domains"/>
    <property type="match status" value="1"/>
</dbReference>
<feature type="chain" id="PRO_0000441060" description="GDP-mannose 4,6-dehydratase sdnI">
    <location>
        <begin position="1"/>
        <end position="544"/>
    </location>
</feature>
<feature type="region of interest" description="Disordered" evidence="2">
    <location>
        <begin position="366"/>
        <end position="406"/>
    </location>
</feature>
<feature type="compositionally biased region" description="Polar residues" evidence="2">
    <location>
        <begin position="368"/>
        <end position="381"/>
    </location>
</feature>
<feature type="compositionally biased region" description="Polar residues" evidence="2">
    <location>
        <begin position="389"/>
        <end position="404"/>
    </location>
</feature>
<feature type="active site" description="Nucleophile" evidence="1">
    <location>
        <position position="135"/>
    </location>
</feature>
<feature type="active site" description="Nucleophile" evidence="1">
    <location>
        <position position="157"/>
    </location>
</feature>
<feature type="binding site" evidence="1">
    <location>
        <begin position="16"/>
        <end position="21"/>
    </location>
    <ligand>
        <name>NADP(+)</name>
        <dbReference type="ChEBI" id="CHEBI:58349"/>
    </ligand>
</feature>
<feature type="binding site" evidence="1">
    <location>
        <position position="41"/>
    </location>
    <ligand>
        <name>NADP(+)</name>
        <dbReference type="ChEBI" id="CHEBI:58349"/>
    </ligand>
</feature>
<feature type="binding site" evidence="1">
    <location>
        <begin position="64"/>
        <end position="65"/>
    </location>
    <ligand>
        <name>NADP(+)</name>
        <dbReference type="ChEBI" id="CHEBI:58349"/>
    </ligand>
</feature>
<feature type="binding site" evidence="1">
    <location>
        <begin position="86"/>
        <end position="90"/>
    </location>
    <ligand>
        <name>NADP(+)</name>
        <dbReference type="ChEBI" id="CHEBI:58349"/>
    </ligand>
</feature>
<feature type="binding site" evidence="1">
    <location>
        <position position="90"/>
    </location>
    <ligand>
        <name>substrate</name>
    </ligand>
</feature>
<feature type="binding site" evidence="1">
    <location>
        <position position="157"/>
    </location>
    <ligand>
        <name>substrate</name>
    </ligand>
</feature>
<feature type="binding site" evidence="1">
    <location>
        <position position="161"/>
    </location>
    <ligand>
        <name>NADP(+)</name>
        <dbReference type="ChEBI" id="CHEBI:58349"/>
    </ligand>
</feature>
<feature type="binding site" evidence="1">
    <location>
        <position position="186"/>
    </location>
    <ligand>
        <name>substrate</name>
    </ligand>
</feature>
<feature type="binding site" evidence="1">
    <location>
        <position position="187"/>
    </location>
    <ligand>
        <name>NADP(+)</name>
        <dbReference type="ChEBI" id="CHEBI:58349"/>
    </ligand>
</feature>
<feature type="binding site" evidence="1">
    <location>
        <begin position="192"/>
        <end position="200"/>
    </location>
    <ligand>
        <name>substrate</name>
    </ligand>
</feature>
<feature type="binding site" evidence="1">
    <location>
        <position position="192"/>
    </location>
    <ligand>
        <name>NADP(+)</name>
        <dbReference type="ChEBI" id="CHEBI:58349"/>
    </ligand>
</feature>
<feature type="binding site" evidence="1">
    <location>
        <position position="219"/>
    </location>
    <ligand>
        <name>substrate</name>
    </ligand>
</feature>
<feature type="binding site" evidence="1">
    <location>
        <position position="225"/>
    </location>
    <ligand>
        <name>substrate</name>
    </ligand>
</feature>
<feature type="binding site" evidence="1">
    <location>
        <begin position="303"/>
        <end position="306"/>
    </location>
    <ligand>
        <name>substrate</name>
    </ligand>
</feature>
<comment type="function">
    <text evidence="3">GDP-mannose 4,6-dehydratase; part of the gene cluster that mediates the biosynthesis of sordarin and hypoxysordarin, glycoside antibiotics with a unique tetracyclic diterpene aglycone structure (PubMed:27072286). First, the geranylgeranyl diphosphate synthase sdnC constructs GGDP from farnesyl diphosphate and isopentenyl diphosphate (PubMed:27072286). The diterpene cyclase sdnA then catalyzes the cyclization of GGDP to afford cycloaraneosene (PubMed:27072286). Cycloaraneosene is then hydroxylated four times by the putative cytochrome P450 monooxygenases sdnB, sdnE, sdnF and sdnH to give a hydroxylated cycloaraneosene derivative such as cycloaraneosene-8,9,13,19-tetraol (PubMed:27072286). Although the order of the hydroxylations is unclear, at least C8, C9 and C13 of the cycloaraneosene skeleton are hydroxylated before the sordaricin formation (PubMed:27072286). Dehydration of the 13-hydroxy group of the hydroxylated cycloaraneosene derivative might be catalyzed by an unassigned hypothetical protein such as sdnG and sdnP to construct the cyclopentadiene moiety (PubMed:27072286). The FAD-dependent oxidoreductase sdnN is proposed to catalyze the oxidation at C9 of the hydroxylated cycloaraneosene derivative and also catalyze the Baeyer-Villiger oxidation to give the lactone intermediate (PubMed:27072286). The presumed lactone intermediate would be hydrolyzed to give an acrolein moiety and a carboxylate moiety (PubMed:27072286). Then, [4+2]cycloaddition would occur between the acrolein moiety and the cyclopentadiene moiety to give sordaricin (PubMed:27072286). SdnN might also be involved in the [4+2]cycloaddition after the hypothesized oxidation to accommodate the oxidized product and prompt the [4+2]cycloaddition (PubMed:27072286). GDP-6-deoxy-D-altrose may be biosynthesized from GDP-D-mannose by the putative GDP-mannose-4,6-dehydratase sdnI and the short-chain dehydrogenase sdnK (PubMed:27072286). The glycosyltransferase sdnJ catalyzes the attachment of 6-deoxy-D-altrose onto the 19-hydroxy group of sordaricin to give 4'-O-demethylsordarin (PubMed:27072286). The methyltransferase sdnD would complete the biosynthesis of sordarin (PubMed:27072286). Sordarin can be further modified into hypoxysordarin (PubMed:27072286). The unique acyl chain at the 3'-hydroxy group of hypoxysordarin would be constructed by an iterative type I PKS sdnO and the trans-acting polyketide methyltransferase sdnL. SdnL would be responsible for the introduction of an alpha-methyl group of the polyketide chain (PubMed:27072286). Alternatively, the beta-lactamase-like protein sdnR might be responsible for the cleavage and transfer of the polyketide chain from the PKS sdnO to sordarin (PubMed:27072286). Two putative cytochrome P450 monooxygenases, sdnQ and sdnT, might catalyze the epoxidations of the polyketide chain to complete the biosynthesis of hypoxysordarin (PubMed:27072286). Transcriptional regulators sdnM and sdnS are presumably encoded for the transcriptional regulation of the expression of the sdn gene cluster (PubMed:27072286).</text>
</comment>
<comment type="catalytic activity">
    <reaction evidence="1">
        <text>GDP-alpha-D-mannose = GDP-4-dehydro-alpha-D-rhamnose + H2O</text>
        <dbReference type="Rhea" id="RHEA:23820"/>
        <dbReference type="ChEBI" id="CHEBI:15377"/>
        <dbReference type="ChEBI" id="CHEBI:57527"/>
        <dbReference type="ChEBI" id="CHEBI:57964"/>
        <dbReference type="EC" id="4.2.1.47"/>
    </reaction>
</comment>
<comment type="cofactor">
    <cofactor evidence="1">
        <name>NADP(+)</name>
        <dbReference type="ChEBI" id="CHEBI:58349"/>
    </cofactor>
</comment>
<comment type="pathway">
    <text evidence="6">Antibiotic biosynthesis.</text>
</comment>
<comment type="similarity">
    <text evidence="5">Belongs to the NAD(P)-dependent epimerase/dehydratase family. GDP-mannose 4,6-dehydratase subfamily.</text>
</comment>
<sequence>MATVDSQRPKSAFITGITGQDGSYLVDILLEKGYQVHGLVRPSSQRRQFLSHPLRRGITLHYGDMTDSATLMQILSSITVDEVYHLAAQSHVAVSFQTPLLTCDINALGTLRLLEVLRILGLEKRVRFYSAVTSELFGNEAPAPQTEETPMAPVSPYAVSKLFQYAITANFREAYGFHASNGILFNHESPRRGTTFVTRKITTQVALIACGLSESFELGNLNATRDWGHAQDYMEGVWMMLQQPEGSDYVLATGQASSVRDFVEAAFKVIGTKIEWSGENESEMGTEVGTGKVRVRVNPEYYRPVENENLLGSAVKAKAAFGWEPKYTLESLVEEMVLSDIELVKSGKMFSTTNLDWLIDRSAEDGETTSAVNSSPSSTAGDTYKASDGWSTSGAEGSEQTECSSVAEGTDIPVPEKVELLPSAGVEEGGHDVAIDVLGKDDCGKVVLTLDEQDKPNENDEGHLAVVAVEEATATTPFVGTDLIKMDSSISIEPATPSPSTVAESERRVNLTITIDGEGRVTKVYNVPDFTAEEKVTLPTPVTA</sequence>
<proteinExistence type="inferred from homology"/>
<keyword id="KW-0045">Antibiotic biosynthesis</keyword>
<keyword id="KW-0456">Lyase</keyword>
<keyword id="KW-0521">NADP</keyword>
<evidence type="ECO:0000250" key="1">
    <source>
        <dbReference type="UniProtKB" id="P93031"/>
    </source>
</evidence>
<evidence type="ECO:0000256" key="2">
    <source>
        <dbReference type="SAM" id="MobiDB-lite"/>
    </source>
</evidence>
<evidence type="ECO:0000269" key="3">
    <source>
    </source>
</evidence>
<evidence type="ECO:0000303" key="4">
    <source>
    </source>
</evidence>
<evidence type="ECO:0000305" key="5"/>
<evidence type="ECO:0000305" key="6">
    <source>
    </source>
</evidence>
<reference key="1">
    <citation type="journal article" date="2016" name="J. Antibiot.">
        <title>Genome mining of the sordarin biosynthetic gene cluster from Sordaria araneosa Cain ATCC 36386: characterization of cycloaraneosene synthase and GDP-6-deoxyaltrose transferase.</title>
        <authorList>
            <person name="Kudo F."/>
            <person name="Matsuura Y."/>
            <person name="Hayashi T."/>
            <person name="Fukushima M."/>
            <person name="Eguchi T."/>
        </authorList>
    </citation>
    <scope>NUCLEOTIDE SEQUENCE [GENOMIC DNA]</scope>
    <scope>FUNCTION</scope>
    <scope>PATHWAY</scope>
    <source>
        <strain>ATCC 36386 / NRRL 3196</strain>
    </source>
</reference>
<name>SDNI_SORAA</name>